<comment type="function">
    <text>Core component of nucleosome. Nucleosomes wrap and compact DNA into chromatin, limiting DNA accessibility to the cellular machineries which require DNA as a template. Histones thereby play a central role in transcription regulation, DNA repair, DNA replication and chromosomal stability. DNA accessibility is regulated via a complex set of post-translational modifications of histones, also called histone code, and nucleosome remodeling.</text>
</comment>
<comment type="subunit">
    <text>The nucleosome is a histone octamer containing two molecules each of H2A, H2B, H3 and H4 assembled in one H3-H4 heterotetramer and two H2A-H2B heterodimers. The octamer wraps approximately 147 bp of DNA.</text>
</comment>
<comment type="subcellular location">
    <subcellularLocation>
        <location evidence="1">Nucleus</location>
    </subcellularLocation>
    <subcellularLocation>
        <location evidence="1">Chromosome</location>
    </subcellularLocation>
</comment>
<comment type="similarity">
    <text evidence="3">Belongs to the histone H3 family.</text>
</comment>
<proteinExistence type="inferred from homology"/>
<reference key="1">
    <citation type="journal article" date="1990" name="Nucleic Acids Res.">
        <title>Characterization of the promoter region of Tetrahymena genes.</title>
        <authorList>
            <person name="Brunk C.F."/>
            <person name="Sadler L.A."/>
        </authorList>
    </citation>
    <scope>NUCLEOTIDE SEQUENCE [GENOMIC DNA]</scope>
</reference>
<reference key="2">
    <citation type="journal article" date="1990" name="J. Mol. Evol.">
        <title>Phylogenetic relationships among Tetrahymena species determined using the polymerase chain reaction.</title>
        <authorList>
            <person name="Brunk C.F."/>
            <person name="Kahn R.W."/>
            <person name="Sadler L.A."/>
        </authorList>
    </citation>
    <scope>NUCLEOTIDE SEQUENCE [GENOMIC DNA]</scope>
</reference>
<organism>
    <name type="scientific">Tetrahymena sonneborni</name>
    <dbReference type="NCBI Taxonomy" id="5910"/>
    <lineage>
        <taxon>Eukaryota</taxon>
        <taxon>Sar</taxon>
        <taxon>Alveolata</taxon>
        <taxon>Ciliophora</taxon>
        <taxon>Intramacronucleata</taxon>
        <taxon>Oligohymenophorea</taxon>
        <taxon>Hymenostomatida</taxon>
        <taxon>Tetrahymenina</taxon>
        <taxon>Tetrahymenidae</taxon>
        <taxon>Tetrahymena</taxon>
    </lineage>
</organism>
<sequence length="41" mass="4343">MARTKQTARKSTGAKAPRKQLASKAARKSAPATGGIKKPHR</sequence>
<accession>P69126</accession>
<accession>P17705</accession>
<dbReference type="EMBL" id="X17142">
    <property type="protein sequence ID" value="CAA35018.1"/>
    <property type="molecule type" value="Genomic_DNA"/>
</dbReference>
<dbReference type="GO" id="GO:0000786">
    <property type="term" value="C:nucleosome"/>
    <property type="evidence" value="ECO:0007669"/>
    <property type="project" value="UniProtKB-KW"/>
</dbReference>
<dbReference type="GO" id="GO:0005634">
    <property type="term" value="C:nucleus"/>
    <property type="evidence" value="ECO:0007669"/>
    <property type="project" value="UniProtKB-SubCell"/>
</dbReference>
<dbReference type="GO" id="GO:0003677">
    <property type="term" value="F:DNA binding"/>
    <property type="evidence" value="ECO:0007669"/>
    <property type="project" value="UniProtKB-KW"/>
</dbReference>
<dbReference type="GO" id="GO:0046982">
    <property type="term" value="F:protein heterodimerization activity"/>
    <property type="evidence" value="ECO:0007669"/>
    <property type="project" value="InterPro"/>
</dbReference>
<dbReference type="GO" id="GO:0030527">
    <property type="term" value="F:structural constituent of chromatin"/>
    <property type="evidence" value="ECO:0007669"/>
    <property type="project" value="InterPro"/>
</dbReference>
<dbReference type="Gene3D" id="1.10.20.10">
    <property type="entry name" value="Histone, subunit A"/>
    <property type="match status" value="1"/>
</dbReference>
<dbReference type="InterPro" id="IPR009072">
    <property type="entry name" value="Histone-fold"/>
</dbReference>
<dbReference type="InterPro" id="IPR000164">
    <property type="entry name" value="Histone_H3/CENP-A"/>
</dbReference>
<dbReference type="PANTHER" id="PTHR11426">
    <property type="entry name" value="HISTONE H3"/>
    <property type="match status" value="1"/>
</dbReference>
<dbReference type="PRINTS" id="PR00622">
    <property type="entry name" value="HISTONEH3"/>
</dbReference>
<dbReference type="SUPFAM" id="SSF47113">
    <property type="entry name" value="Histone-fold"/>
    <property type="match status" value="1"/>
</dbReference>
<dbReference type="PROSITE" id="PS00322">
    <property type="entry name" value="HISTONE_H3_1"/>
    <property type="match status" value="1"/>
</dbReference>
<evidence type="ECO:0000250" key="1"/>
<evidence type="ECO:0000256" key="2">
    <source>
        <dbReference type="SAM" id="MobiDB-lite"/>
    </source>
</evidence>
<evidence type="ECO:0000305" key="3"/>
<keyword id="KW-0158">Chromosome</keyword>
<keyword id="KW-0238">DNA-binding</keyword>
<keyword id="KW-0544">Nucleosome core</keyword>
<keyword id="KW-0539">Nucleus</keyword>
<name>H32_TETSO</name>
<protein>
    <recommendedName>
        <fullName>Histone H3.2</fullName>
    </recommendedName>
</protein>
<feature type="initiator methionine" description="Removed" evidence="1">
    <location>
        <position position="1"/>
    </location>
</feature>
<feature type="chain" id="PRO_0000221349" description="Histone H3.2">
    <location>
        <begin position="2"/>
        <end position="41" status="greater than"/>
    </location>
</feature>
<feature type="region of interest" description="Disordered" evidence="2">
    <location>
        <begin position="1"/>
        <end position="41"/>
    </location>
</feature>
<feature type="non-terminal residue">
    <location>
        <position position="41"/>
    </location>
</feature>